<sequence>MKEGIHPNYREVVFQDMSSDFSFITRSTIQTKDKIVKDGKEYPLAKIEVSSESHPFYTGTQKIMDTAGRVEKFRQKFGNKLGKAAK</sequence>
<protein>
    <recommendedName>
        <fullName evidence="1">Large ribosomal subunit protein bL31B</fullName>
    </recommendedName>
    <alternativeName>
        <fullName evidence="2">50S ribosomal protein L31 type B</fullName>
    </alternativeName>
</protein>
<organism>
    <name type="scientific">Cupriavidus necator (strain ATCC 17699 / DSM 428 / KCTC 22496 / NCIMB 10442 / H16 / Stanier 337)</name>
    <name type="common">Ralstonia eutropha</name>
    <dbReference type="NCBI Taxonomy" id="381666"/>
    <lineage>
        <taxon>Bacteria</taxon>
        <taxon>Pseudomonadati</taxon>
        <taxon>Pseudomonadota</taxon>
        <taxon>Betaproteobacteria</taxon>
        <taxon>Burkholderiales</taxon>
        <taxon>Burkholderiaceae</taxon>
        <taxon>Cupriavidus</taxon>
    </lineage>
</organism>
<feature type="chain" id="PRO_1000014714" description="Large ribosomal subunit protein bL31B">
    <location>
        <begin position="1"/>
        <end position="86"/>
    </location>
</feature>
<dbReference type="EMBL" id="AM260479">
    <property type="protein sequence ID" value="CAJ93492.1"/>
    <property type="molecule type" value="Genomic_DNA"/>
</dbReference>
<dbReference type="RefSeq" id="WP_010814268.1">
    <property type="nucleotide sequence ID" value="NZ_CP039287.1"/>
</dbReference>
<dbReference type="SMR" id="Q0K929"/>
<dbReference type="STRING" id="381666.H16_A2397"/>
<dbReference type="KEGG" id="reh:H16_A2397"/>
<dbReference type="eggNOG" id="COG0254">
    <property type="taxonomic scope" value="Bacteria"/>
</dbReference>
<dbReference type="HOGENOM" id="CLU_114306_2_2_4"/>
<dbReference type="OrthoDB" id="9803251at2"/>
<dbReference type="Proteomes" id="UP000008210">
    <property type="component" value="Chromosome 1"/>
</dbReference>
<dbReference type="GO" id="GO:1990904">
    <property type="term" value="C:ribonucleoprotein complex"/>
    <property type="evidence" value="ECO:0007669"/>
    <property type="project" value="UniProtKB-KW"/>
</dbReference>
<dbReference type="GO" id="GO:0005840">
    <property type="term" value="C:ribosome"/>
    <property type="evidence" value="ECO:0007669"/>
    <property type="project" value="UniProtKB-KW"/>
</dbReference>
<dbReference type="GO" id="GO:0003735">
    <property type="term" value="F:structural constituent of ribosome"/>
    <property type="evidence" value="ECO:0007669"/>
    <property type="project" value="InterPro"/>
</dbReference>
<dbReference type="GO" id="GO:0006412">
    <property type="term" value="P:translation"/>
    <property type="evidence" value="ECO:0007669"/>
    <property type="project" value="UniProtKB-UniRule"/>
</dbReference>
<dbReference type="Gene3D" id="4.10.830.30">
    <property type="entry name" value="Ribosomal protein L31"/>
    <property type="match status" value="1"/>
</dbReference>
<dbReference type="HAMAP" id="MF_00502">
    <property type="entry name" value="Ribosomal_bL31_2"/>
    <property type="match status" value="1"/>
</dbReference>
<dbReference type="InterPro" id="IPR034704">
    <property type="entry name" value="Ribosomal_bL28/bL31-like_sf"/>
</dbReference>
<dbReference type="InterPro" id="IPR002150">
    <property type="entry name" value="Ribosomal_bL31"/>
</dbReference>
<dbReference type="InterPro" id="IPR027493">
    <property type="entry name" value="Ribosomal_bL31_B"/>
</dbReference>
<dbReference type="InterPro" id="IPR042105">
    <property type="entry name" value="Ribosomal_bL31_sf"/>
</dbReference>
<dbReference type="NCBIfam" id="TIGR00105">
    <property type="entry name" value="L31"/>
    <property type="match status" value="1"/>
</dbReference>
<dbReference type="NCBIfam" id="NF002462">
    <property type="entry name" value="PRK01678.1"/>
    <property type="match status" value="1"/>
</dbReference>
<dbReference type="PANTHER" id="PTHR33280">
    <property type="entry name" value="50S RIBOSOMAL PROTEIN L31, CHLOROPLASTIC"/>
    <property type="match status" value="1"/>
</dbReference>
<dbReference type="PANTHER" id="PTHR33280:SF1">
    <property type="entry name" value="LARGE RIBOSOMAL SUBUNIT PROTEIN BL31C"/>
    <property type="match status" value="1"/>
</dbReference>
<dbReference type="Pfam" id="PF01197">
    <property type="entry name" value="Ribosomal_L31"/>
    <property type="match status" value="1"/>
</dbReference>
<dbReference type="PRINTS" id="PR01249">
    <property type="entry name" value="RIBOSOMALL31"/>
</dbReference>
<dbReference type="SUPFAM" id="SSF143800">
    <property type="entry name" value="L28p-like"/>
    <property type="match status" value="1"/>
</dbReference>
<dbReference type="PROSITE" id="PS01143">
    <property type="entry name" value="RIBOSOMAL_L31"/>
    <property type="match status" value="1"/>
</dbReference>
<evidence type="ECO:0000255" key="1">
    <source>
        <dbReference type="HAMAP-Rule" id="MF_00502"/>
    </source>
</evidence>
<evidence type="ECO:0000305" key="2"/>
<gene>
    <name evidence="1" type="primary">rpmE2</name>
    <name type="ordered locus">H16_A2397</name>
</gene>
<proteinExistence type="inferred from homology"/>
<keyword id="KW-1185">Reference proteome</keyword>
<keyword id="KW-0687">Ribonucleoprotein</keyword>
<keyword id="KW-0689">Ribosomal protein</keyword>
<reference key="1">
    <citation type="journal article" date="2006" name="Nat. Biotechnol.">
        <title>Genome sequence of the bioplastic-producing 'Knallgas' bacterium Ralstonia eutropha H16.</title>
        <authorList>
            <person name="Pohlmann A."/>
            <person name="Fricke W.F."/>
            <person name="Reinecke F."/>
            <person name="Kusian B."/>
            <person name="Liesegang H."/>
            <person name="Cramm R."/>
            <person name="Eitinger T."/>
            <person name="Ewering C."/>
            <person name="Poetter M."/>
            <person name="Schwartz E."/>
            <person name="Strittmatter A."/>
            <person name="Voss I."/>
            <person name="Gottschalk G."/>
            <person name="Steinbuechel A."/>
            <person name="Friedrich B."/>
            <person name="Bowien B."/>
        </authorList>
    </citation>
    <scope>NUCLEOTIDE SEQUENCE [LARGE SCALE GENOMIC DNA]</scope>
    <source>
        <strain>ATCC 17699 / DSM 428 / KCTC 22496 / NCIMB 10442 / H16 / Stanier 337</strain>
    </source>
</reference>
<comment type="subunit">
    <text evidence="1">Part of the 50S ribosomal subunit.</text>
</comment>
<comment type="similarity">
    <text evidence="1">Belongs to the bacterial ribosomal protein bL31 family. Type B subfamily.</text>
</comment>
<accession>Q0K929</accession>
<name>RL31B_CUPNH</name>